<gene>
    <name evidence="1" type="primary">speA</name>
    <name type="ordered locus">P9301_00481</name>
</gene>
<reference key="1">
    <citation type="journal article" date="2007" name="PLoS Genet.">
        <title>Patterns and implications of gene gain and loss in the evolution of Prochlorococcus.</title>
        <authorList>
            <person name="Kettler G.C."/>
            <person name="Martiny A.C."/>
            <person name="Huang K."/>
            <person name="Zucker J."/>
            <person name="Coleman M.L."/>
            <person name="Rodrigue S."/>
            <person name="Chen F."/>
            <person name="Lapidus A."/>
            <person name="Ferriera S."/>
            <person name="Johnson J."/>
            <person name="Steglich C."/>
            <person name="Church G.M."/>
            <person name="Richardson P."/>
            <person name="Chisholm S.W."/>
        </authorList>
    </citation>
    <scope>NUCLEOTIDE SEQUENCE [LARGE SCALE GENOMIC DNA]</scope>
    <source>
        <strain>MIT 9301</strain>
    </source>
</reference>
<keyword id="KW-0210">Decarboxylase</keyword>
<keyword id="KW-0456">Lyase</keyword>
<keyword id="KW-0460">Magnesium</keyword>
<keyword id="KW-0479">Metal-binding</keyword>
<keyword id="KW-0620">Polyamine biosynthesis</keyword>
<keyword id="KW-0663">Pyridoxal phosphate</keyword>
<keyword id="KW-1185">Reference proteome</keyword>
<keyword id="KW-0745">Spermidine biosynthesis</keyword>
<comment type="function">
    <text evidence="1">Catalyzes the biosynthesis of agmatine from arginine.</text>
</comment>
<comment type="catalytic activity">
    <reaction evidence="1">
        <text>L-arginine + H(+) = agmatine + CO2</text>
        <dbReference type="Rhea" id="RHEA:17641"/>
        <dbReference type="ChEBI" id="CHEBI:15378"/>
        <dbReference type="ChEBI" id="CHEBI:16526"/>
        <dbReference type="ChEBI" id="CHEBI:32682"/>
        <dbReference type="ChEBI" id="CHEBI:58145"/>
        <dbReference type="EC" id="4.1.1.19"/>
    </reaction>
</comment>
<comment type="cofactor">
    <cofactor evidence="1">
        <name>Mg(2+)</name>
        <dbReference type="ChEBI" id="CHEBI:18420"/>
    </cofactor>
</comment>
<comment type="cofactor">
    <cofactor evidence="1">
        <name>pyridoxal 5'-phosphate</name>
        <dbReference type="ChEBI" id="CHEBI:597326"/>
    </cofactor>
</comment>
<comment type="pathway">
    <text evidence="1">Amine and polyamine biosynthesis; agmatine biosynthesis; agmatine from L-arginine: step 1/1.</text>
</comment>
<comment type="similarity">
    <text evidence="1">Belongs to the Orn/Lys/Arg decarboxylase class-II family. SpeA subfamily.</text>
</comment>
<dbReference type="EC" id="4.1.1.19" evidence="1"/>
<dbReference type="EMBL" id="CP000576">
    <property type="protein sequence ID" value="ABO16671.1"/>
    <property type="molecule type" value="Genomic_DNA"/>
</dbReference>
<dbReference type="RefSeq" id="WP_011862076.1">
    <property type="nucleotide sequence ID" value="NC_009091.1"/>
</dbReference>
<dbReference type="SMR" id="A3PA96"/>
<dbReference type="STRING" id="167546.P9301_00481"/>
<dbReference type="KEGG" id="pmg:P9301_00481"/>
<dbReference type="eggNOG" id="COG1166">
    <property type="taxonomic scope" value="Bacteria"/>
</dbReference>
<dbReference type="HOGENOM" id="CLU_027243_1_0_3"/>
<dbReference type="OrthoDB" id="9802658at2"/>
<dbReference type="UniPathway" id="UPA00186">
    <property type="reaction ID" value="UER00284"/>
</dbReference>
<dbReference type="Proteomes" id="UP000001430">
    <property type="component" value="Chromosome"/>
</dbReference>
<dbReference type="GO" id="GO:0008792">
    <property type="term" value="F:arginine decarboxylase activity"/>
    <property type="evidence" value="ECO:0007669"/>
    <property type="project" value="UniProtKB-UniRule"/>
</dbReference>
<dbReference type="GO" id="GO:0046872">
    <property type="term" value="F:metal ion binding"/>
    <property type="evidence" value="ECO:0007669"/>
    <property type="project" value="UniProtKB-KW"/>
</dbReference>
<dbReference type="GO" id="GO:0006527">
    <property type="term" value="P:arginine catabolic process"/>
    <property type="evidence" value="ECO:0007669"/>
    <property type="project" value="InterPro"/>
</dbReference>
<dbReference type="GO" id="GO:0008295">
    <property type="term" value="P:spermidine biosynthetic process"/>
    <property type="evidence" value="ECO:0007669"/>
    <property type="project" value="UniProtKB-UniRule"/>
</dbReference>
<dbReference type="CDD" id="cd06830">
    <property type="entry name" value="PLPDE_III_ADC"/>
    <property type="match status" value="1"/>
</dbReference>
<dbReference type="Gene3D" id="1.20.58.930">
    <property type="match status" value="1"/>
</dbReference>
<dbReference type="Gene3D" id="3.20.20.10">
    <property type="entry name" value="Alanine racemase"/>
    <property type="match status" value="1"/>
</dbReference>
<dbReference type="Gene3D" id="2.40.37.10">
    <property type="entry name" value="Lyase, Ornithine Decarboxylase, Chain A, domain 1"/>
    <property type="match status" value="1"/>
</dbReference>
<dbReference type="HAMAP" id="MF_01417">
    <property type="entry name" value="SpeA"/>
    <property type="match status" value="1"/>
</dbReference>
<dbReference type="InterPro" id="IPR009006">
    <property type="entry name" value="Ala_racemase/Decarboxylase_C"/>
</dbReference>
<dbReference type="InterPro" id="IPR040634">
    <property type="entry name" value="Arg_decarb_HB"/>
</dbReference>
<dbReference type="InterPro" id="IPR041128">
    <property type="entry name" value="Arg_decarbox_C"/>
</dbReference>
<dbReference type="InterPro" id="IPR002985">
    <property type="entry name" value="Arg_decrbxlase"/>
</dbReference>
<dbReference type="InterPro" id="IPR022657">
    <property type="entry name" value="De-COase2_CS"/>
</dbReference>
<dbReference type="InterPro" id="IPR022644">
    <property type="entry name" value="De-COase2_N"/>
</dbReference>
<dbReference type="InterPro" id="IPR022653">
    <property type="entry name" value="De-COase2_pyr-phos_BS"/>
</dbReference>
<dbReference type="InterPro" id="IPR000183">
    <property type="entry name" value="Orn/DAP/Arg_de-COase"/>
</dbReference>
<dbReference type="InterPro" id="IPR029066">
    <property type="entry name" value="PLP-binding_barrel"/>
</dbReference>
<dbReference type="NCBIfam" id="NF003763">
    <property type="entry name" value="PRK05354.1"/>
    <property type="match status" value="1"/>
</dbReference>
<dbReference type="NCBIfam" id="TIGR01273">
    <property type="entry name" value="speA"/>
    <property type="match status" value="1"/>
</dbReference>
<dbReference type="PANTHER" id="PTHR43295">
    <property type="entry name" value="ARGININE DECARBOXYLASE"/>
    <property type="match status" value="1"/>
</dbReference>
<dbReference type="PANTHER" id="PTHR43295:SF9">
    <property type="entry name" value="BIOSYNTHETIC ARGININE DECARBOXYLASE"/>
    <property type="match status" value="1"/>
</dbReference>
<dbReference type="Pfam" id="PF17810">
    <property type="entry name" value="Arg_decarb_HB"/>
    <property type="match status" value="1"/>
</dbReference>
<dbReference type="Pfam" id="PF17944">
    <property type="entry name" value="Arg_decarbox_C"/>
    <property type="match status" value="1"/>
</dbReference>
<dbReference type="Pfam" id="PF02784">
    <property type="entry name" value="Orn_Arg_deC_N"/>
    <property type="match status" value="1"/>
</dbReference>
<dbReference type="PIRSF" id="PIRSF001336">
    <property type="entry name" value="Arg_decrbxlase"/>
    <property type="match status" value="1"/>
</dbReference>
<dbReference type="PRINTS" id="PR01180">
    <property type="entry name" value="ARGDCRBXLASE"/>
</dbReference>
<dbReference type="PRINTS" id="PR01179">
    <property type="entry name" value="ODADCRBXLASE"/>
</dbReference>
<dbReference type="SUPFAM" id="SSF50621">
    <property type="entry name" value="Alanine racemase C-terminal domain-like"/>
    <property type="match status" value="1"/>
</dbReference>
<dbReference type="SUPFAM" id="SSF51419">
    <property type="entry name" value="PLP-binding barrel"/>
    <property type="match status" value="1"/>
</dbReference>
<dbReference type="PROSITE" id="PS00878">
    <property type="entry name" value="ODR_DC_2_1"/>
    <property type="match status" value="1"/>
</dbReference>
<dbReference type="PROSITE" id="PS00879">
    <property type="entry name" value="ODR_DC_2_2"/>
    <property type="match status" value="1"/>
</dbReference>
<name>SPEA_PROM0</name>
<feature type="chain" id="PRO_1000024258" description="Biosynthetic arginine decarboxylase">
    <location>
        <begin position="1"/>
        <end position="648"/>
    </location>
</feature>
<feature type="binding site" evidence="1">
    <location>
        <begin position="291"/>
        <end position="301"/>
    </location>
    <ligand>
        <name>substrate</name>
    </ligand>
</feature>
<feature type="modified residue" description="N6-(pyridoxal phosphate)lysine" evidence="1">
    <location>
        <position position="109"/>
    </location>
</feature>
<evidence type="ECO:0000255" key="1">
    <source>
        <dbReference type="HAMAP-Rule" id="MF_01417"/>
    </source>
</evidence>
<proteinExistence type="inferred from homology"/>
<protein>
    <recommendedName>
        <fullName evidence="1">Biosynthetic arginine decarboxylase</fullName>
        <shortName evidence="1">ADC</shortName>
        <ecNumber evidence="1">4.1.1.19</ecNumber>
    </recommendedName>
</protein>
<accession>A3PA96</accession>
<sequence>MTNFEPKKLKNVWTIEDSISTYNIDKWGDKYFSINSKGNISVTKDIKSENKIDLFKLVKELKSREINPPLIIRFNDILKDRINALHDSFFKAIKTYKYKNIYQGVFPVKCNQQKNVLEKIIDFGSQWNFGLEVGSKSELLIGLALLENHNSLLICNGYKDKKYIEIATLARKLGKNPIIVIEQRDEVKRIIQAVQELNATPLIGIRAKLSSKSSGRWGKSIGDNSKFGLSIPEIMLTIKELKEANLINEMKLLHFHIGSQISDIAVIKDALQEASQIYVELCKLGAPMQYIDVGGGLGIDFDGTKTSSNTSTNYSLQNYANDVIATIKDSCELNNIKHPTIISESGRAIISHCSVLIFNVLGTSHVSSKLQIFDKKNQQLIISNLLETYYELKKLKNKKINLSQIIELWNDAKKFKEDCLVAFRLGFLSLAERAYAEELAWACAKEISNNLNNDEINHPDLSEITETLASTYYANLSIFKSIPDSWAINQIFPIVPIHRHLEEPFCKGNFADLTCDSDGKLNNFIDDGKIKSLLNLHEPEKDKDYLIGIFMTGAYQEALGNLHNLFGSTNVVHIDINQDDSYKVKNIIKEDSKSEILQLLDYSSASLVESIRINTESAIDQKKLTIEEARKLMDQIEISLRKSSYLSE</sequence>
<organism>
    <name type="scientific">Prochlorococcus marinus (strain MIT 9301)</name>
    <dbReference type="NCBI Taxonomy" id="167546"/>
    <lineage>
        <taxon>Bacteria</taxon>
        <taxon>Bacillati</taxon>
        <taxon>Cyanobacteriota</taxon>
        <taxon>Cyanophyceae</taxon>
        <taxon>Synechococcales</taxon>
        <taxon>Prochlorococcaceae</taxon>
        <taxon>Prochlorococcus</taxon>
    </lineage>
</organism>